<proteinExistence type="evidence at protein level"/>
<organism>
    <name type="scientific">Arabidopsis thaliana</name>
    <name type="common">Mouse-ear cress</name>
    <dbReference type="NCBI Taxonomy" id="3702"/>
    <lineage>
        <taxon>Eukaryota</taxon>
        <taxon>Viridiplantae</taxon>
        <taxon>Streptophyta</taxon>
        <taxon>Embryophyta</taxon>
        <taxon>Tracheophyta</taxon>
        <taxon>Spermatophyta</taxon>
        <taxon>Magnoliopsida</taxon>
        <taxon>eudicotyledons</taxon>
        <taxon>Gunneridae</taxon>
        <taxon>Pentapetalae</taxon>
        <taxon>rosids</taxon>
        <taxon>malvids</taxon>
        <taxon>Brassicales</taxon>
        <taxon>Brassicaceae</taxon>
        <taxon>Camelineae</taxon>
        <taxon>Arabidopsis</taxon>
    </lineage>
</organism>
<gene>
    <name type="primary">CDKD-1</name>
    <name type="ordered locus">At1g73690</name>
    <name type="ORF">F25P22.11</name>
</gene>
<sequence length="398" mass="45138">MEQPKKVADRYLKREVLGQGTYGVVFKATDTKNGETVAIKKIRLGKEKEGVNVTALREIKLLKELKHPHIIELIDAFPHKENLHIVFEFMETDLEAVIRDRNLYLSPGDVKSYLQMILKGLEYCHGKWVLHRDMKPNNLLIGPNGQLKLADFGLARIFGSPGRKFTHQVFARWYRAPELLFGAKQYDGAVDVWAAGCIFAELLLRRPFLQGNSDIDQLSKIFAAFGTPKADQWPDMICLPDYVEYQFVPAPSLRSLLPTVSEDALDLLSKMFTYDPKSRISIQQALKHRYFTSAPSPTDPLKLPRPVSKQDAKSSDSKLEAIKVLSPAHKFRRVMPDRGKSGNGFKDQSVDVMRQASHDGQAPMSLDFTILAERPPNRPTITSADRSHLKRKLDLEFL</sequence>
<reference key="1">
    <citation type="journal article" date="2003" name="FEBS Lett.">
        <title>Differential phosphorylation activities of CDK-activating kinases in Arabidopsis thaliana.</title>
        <authorList>
            <person name="Shimotohno A."/>
            <person name="Matsubayashi S."/>
            <person name="Yamaguchi M."/>
            <person name="Uchimiya H."/>
            <person name="Umeda M."/>
        </authorList>
    </citation>
    <scope>NUCLEOTIDE SEQUENCE [MRNA]</scope>
    <scope>TISSUE SPECIFICITY</scope>
</reference>
<reference key="2">
    <citation type="journal article" date="2000" name="Nature">
        <title>Sequence and analysis of chromosome 1 of the plant Arabidopsis thaliana.</title>
        <authorList>
            <person name="Theologis A."/>
            <person name="Ecker J.R."/>
            <person name="Palm C.J."/>
            <person name="Federspiel N.A."/>
            <person name="Kaul S."/>
            <person name="White O."/>
            <person name="Alonso J."/>
            <person name="Altafi H."/>
            <person name="Araujo R."/>
            <person name="Bowman C.L."/>
            <person name="Brooks S.Y."/>
            <person name="Buehler E."/>
            <person name="Chan A."/>
            <person name="Chao Q."/>
            <person name="Chen H."/>
            <person name="Cheuk R.F."/>
            <person name="Chin C.W."/>
            <person name="Chung M.K."/>
            <person name="Conn L."/>
            <person name="Conway A.B."/>
            <person name="Conway A.R."/>
            <person name="Creasy T.H."/>
            <person name="Dewar K."/>
            <person name="Dunn P."/>
            <person name="Etgu P."/>
            <person name="Feldblyum T.V."/>
            <person name="Feng J.-D."/>
            <person name="Fong B."/>
            <person name="Fujii C.Y."/>
            <person name="Gill J.E."/>
            <person name="Goldsmith A.D."/>
            <person name="Haas B."/>
            <person name="Hansen N.F."/>
            <person name="Hughes B."/>
            <person name="Huizar L."/>
            <person name="Hunter J.L."/>
            <person name="Jenkins J."/>
            <person name="Johnson-Hopson C."/>
            <person name="Khan S."/>
            <person name="Khaykin E."/>
            <person name="Kim C.J."/>
            <person name="Koo H.L."/>
            <person name="Kremenetskaia I."/>
            <person name="Kurtz D.B."/>
            <person name="Kwan A."/>
            <person name="Lam B."/>
            <person name="Langin-Hooper S."/>
            <person name="Lee A."/>
            <person name="Lee J.M."/>
            <person name="Lenz C.A."/>
            <person name="Li J.H."/>
            <person name="Li Y.-P."/>
            <person name="Lin X."/>
            <person name="Liu S.X."/>
            <person name="Liu Z.A."/>
            <person name="Luros J.S."/>
            <person name="Maiti R."/>
            <person name="Marziali A."/>
            <person name="Militscher J."/>
            <person name="Miranda M."/>
            <person name="Nguyen M."/>
            <person name="Nierman W.C."/>
            <person name="Osborne B.I."/>
            <person name="Pai G."/>
            <person name="Peterson J."/>
            <person name="Pham P.K."/>
            <person name="Rizzo M."/>
            <person name="Rooney T."/>
            <person name="Rowley D."/>
            <person name="Sakano H."/>
            <person name="Salzberg S.L."/>
            <person name="Schwartz J.R."/>
            <person name="Shinn P."/>
            <person name="Southwick A.M."/>
            <person name="Sun H."/>
            <person name="Tallon L.J."/>
            <person name="Tambunga G."/>
            <person name="Toriumi M.J."/>
            <person name="Town C.D."/>
            <person name="Utterback T."/>
            <person name="Van Aken S."/>
            <person name="Vaysberg M."/>
            <person name="Vysotskaia V.S."/>
            <person name="Walker M."/>
            <person name="Wu D."/>
            <person name="Yu G."/>
            <person name="Fraser C.M."/>
            <person name="Venter J.C."/>
            <person name="Davis R.W."/>
        </authorList>
    </citation>
    <scope>NUCLEOTIDE SEQUENCE [LARGE SCALE GENOMIC DNA]</scope>
    <source>
        <strain>cv. Columbia</strain>
    </source>
</reference>
<reference key="3">
    <citation type="journal article" date="2017" name="Plant J.">
        <title>Araport11: a complete reannotation of the Arabidopsis thaliana reference genome.</title>
        <authorList>
            <person name="Cheng C.Y."/>
            <person name="Krishnakumar V."/>
            <person name="Chan A.P."/>
            <person name="Thibaud-Nissen F."/>
            <person name="Schobel S."/>
            <person name="Town C.D."/>
        </authorList>
    </citation>
    <scope>GENOME REANNOTATION</scope>
    <source>
        <strain>cv. Columbia</strain>
    </source>
</reference>
<reference key="4">
    <citation type="journal article" date="2003" name="Science">
        <title>Empirical analysis of transcriptional activity in the Arabidopsis genome.</title>
        <authorList>
            <person name="Yamada K."/>
            <person name="Lim J."/>
            <person name="Dale J.M."/>
            <person name="Chen H."/>
            <person name="Shinn P."/>
            <person name="Palm C.J."/>
            <person name="Southwick A.M."/>
            <person name="Wu H.C."/>
            <person name="Kim C.J."/>
            <person name="Nguyen M."/>
            <person name="Pham P.K."/>
            <person name="Cheuk R.F."/>
            <person name="Karlin-Newmann G."/>
            <person name="Liu S.X."/>
            <person name="Lam B."/>
            <person name="Sakano H."/>
            <person name="Wu T."/>
            <person name="Yu G."/>
            <person name="Miranda M."/>
            <person name="Quach H.L."/>
            <person name="Tripp M."/>
            <person name="Chang C.H."/>
            <person name="Lee J.M."/>
            <person name="Toriumi M.J."/>
            <person name="Chan M.M."/>
            <person name="Tang C.C."/>
            <person name="Onodera C.S."/>
            <person name="Deng J.M."/>
            <person name="Akiyama K."/>
            <person name="Ansari Y."/>
            <person name="Arakawa T."/>
            <person name="Banh J."/>
            <person name="Banno F."/>
            <person name="Bowser L."/>
            <person name="Brooks S.Y."/>
            <person name="Carninci P."/>
            <person name="Chao Q."/>
            <person name="Choy N."/>
            <person name="Enju A."/>
            <person name="Goldsmith A.D."/>
            <person name="Gurjal M."/>
            <person name="Hansen N.F."/>
            <person name="Hayashizaki Y."/>
            <person name="Johnson-Hopson C."/>
            <person name="Hsuan V.W."/>
            <person name="Iida K."/>
            <person name="Karnes M."/>
            <person name="Khan S."/>
            <person name="Koesema E."/>
            <person name="Ishida J."/>
            <person name="Jiang P.X."/>
            <person name="Jones T."/>
            <person name="Kawai J."/>
            <person name="Kamiya A."/>
            <person name="Meyers C."/>
            <person name="Nakajima M."/>
            <person name="Narusaka M."/>
            <person name="Seki M."/>
            <person name="Sakurai T."/>
            <person name="Satou M."/>
            <person name="Tamse R."/>
            <person name="Vaysberg M."/>
            <person name="Wallender E.K."/>
            <person name="Wong C."/>
            <person name="Yamamura Y."/>
            <person name="Yuan S."/>
            <person name="Shinozaki K."/>
            <person name="Davis R.W."/>
            <person name="Theologis A."/>
            <person name="Ecker J.R."/>
        </authorList>
    </citation>
    <scope>NUCLEOTIDE SEQUENCE [LARGE SCALE MRNA]</scope>
    <source>
        <strain>cv. Columbia</strain>
    </source>
</reference>
<reference key="5">
    <citation type="journal article" date="2002" name="Plant Cell">
        <title>Genome-wide analysis of core cell cycle genes in Arabidopsis.</title>
        <authorList>
            <person name="Vandepoele K."/>
            <person name="Raes J."/>
            <person name="de Veylder L."/>
            <person name="Rouze P."/>
            <person name="Rombauts S."/>
            <person name="Inze D."/>
        </authorList>
    </citation>
    <scope>GENE FAMILY</scope>
    <scope>NOMENCLATURE</scope>
</reference>
<reference key="6">
    <citation type="journal article" date="2004" name="Plant Cell">
        <title>The plant-specific kinase CDKF;1 is involved in activating phosphorylation of cyclin-dependent kinase-activating kinases in Arabidopsis.</title>
        <authorList>
            <person name="Shimotohno A."/>
            <person name="Umeda-Hara C."/>
            <person name="Bisova K."/>
            <person name="Uchimiya H."/>
            <person name="Umeda M."/>
        </authorList>
    </citation>
    <scope>SUBCELLULAR LOCATION</scope>
    <scope>MUTAGENESIS OF LYS-40</scope>
</reference>
<reference key="7">
    <citation type="journal article" date="2006" name="Annu. Rev. Genet.">
        <title>Cell cycle regulation in plant development.</title>
        <authorList>
            <person name="Inze D."/>
            <person name="de Veylder L."/>
        </authorList>
    </citation>
    <scope>REVIEW</scope>
</reference>
<dbReference type="EC" id="2.7.11.22"/>
<dbReference type="EC" id="2.7.11.23"/>
<dbReference type="EMBL" id="AB047275">
    <property type="protein sequence ID" value="BAB62844.1"/>
    <property type="molecule type" value="mRNA"/>
</dbReference>
<dbReference type="EMBL" id="AC012679">
    <property type="protein sequence ID" value="AAG52081.1"/>
    <property type="molecule type" value="Genomic_DNA"/>
</dbReference>
<dbReference type="EMBL" id="CP002684">
    <property type="protein sequence ID" value="AEE35498.1"/>
    <property type="molecule type" value="Genomic_DNA"/>
</dbReference>
<dbReference type="EMBL" id="AY063843">
    <property type="protein sequence ID" value="AAL36199.1"/>
    <property type="molecule type" value="mRNA"/>
</dbReference>
<dbReference type="EMBL" id="AY091227">
    <property type="protein sequence ID" value="AAM14166.1"/>
    <property type="molecule type" value="mRNA"/>
</dbReference>
<dbReference type="PIR" id="A96764">
    <property type="entry name" value="A96764"/>
</dbReference>
<dbReference type="SMR" id="Q9C9U2"/>
<dbReference type="BioGRID" id="28923">
    <property type="interactions" value="19"/>
</dbReference>
<dbReference type="FunCoup" id="Q9C9U2">
    <property type="interactions" value="4066"/>
</dbReference>
<dbReference type="IntAct" id="Q9C9U2">
    <property type="interactions" value="2"/>
</dbReference>
<dbReference type="STRING" id="3702.Q9C9U2"/>
<dbReference type="GlyGen" id="Q9C9U2">
    <property type="glycosylation" value="1 site"/>
</dbReference>
<dbReference type="PaxDb" id="3702-AT1G73690.1"/>
<dbReference type="ProteomicsDB" id="222811"/>
<dbReference type="EnsemblPlants" id="AT1G73690.1">
    <property type="protein sequence ID" value="AT1G73690.1"/>
    <property type="gene ID" value="AT1G73690"/>
</dbReference>
<dbReference type="GeneID" id="843704"/>
<dbReference type="Gramene" id="AT1G73690.1">
    <property type="protein sequence ID" value="AT1G73690.1"/>
    <property type="gene ID" value="AT1G73690"/>
</dbReference>
<dbReference type="KEGG" id="ath:AT1G73690"/>
<dbReference type="Araport" id="AT1G73690"/>
<dbReference type="TAIR" id="AT1G73690">
    <property type="gene designation" value="CDKD1"/>
</dbReference>
<dbReference type="eggNOG" id="KOG0659">
    <property type="taxonomic scope" value="Eukaryota"/>
</dbReference>
<dbReference type="HOGENOM" id="CLU_000288_181_0_1"/>
<dbReference type="InParanoid" id="Q9C9U2"/>
<dbReference type="OMA" id="VMRQASH"/>
<dbReference type="PhylomeDB" id="Q9C9U2"/>
<dbReference type="PRO" id="PR:Q9C9U2"/>
<dbReference type="Proteomes" id="UP000006548">
    <property type="component" value="Chromosome 1"/>
</dbReference>
<dbReference type="ExpressionAtlas" id="Q9C9U2">
    <property type="expression patterns" value="baseline and differential"/>
</dbReference>
<dbReference type="GO" id="GO:0005634">
    <property type="term" value="C:nucleus"/>
    <property type="evidence" value="ECO:0007005"/>
    <property type="project" value="TAIR"/>
</dbReference>
<dbReference type="GO" id="GO:0070985">
    <property type="term" value="C:transcription factor TFIIK complex"/>
    <property type="evidence" value="ECO:0007669"/>
    <property type="project" value="InterPro"/>
</dbReference>
<dbReference type="GO" id="GO:0005524">
    <property type="term" value="F:ATP binding"/>
    <property type="evidence" value="ECO:0007669"/>
    <property type="project" value="UniProtKB-KW"/>
</dbReference>
<dbReference type="GO" id="GO:0004693">
    <property type="term" value="F:cyclin-dependent protein serine/threonine kinase activity"/>
    <property type="evidence" value="ECO:0007669"/>
    <property type="project" value="UniProtKB-EC"/>
</dbReference>
<dbReference type="GO" id="GO:0106310">
    <property type="term" value="F:protein serine kinase activity"/>
    <property type="evidence" value="ECO:0007669"/>
    <property type="project" value="RHEA"/>
</dbReference>
<dbReference type="GO" id="GO:0008353">
    <property type="term" value="F:RNA polymerase II CTD heptapeptide repeat kinase activity"/>
    <property type="evidence" value="ECO:0007669"/>
    <property type="project" value="UniProtKB-EC"/>
</dbReference>
<dbReference type="GO" id="GO:0030154">
    <property type="term" value="P:cell differentiation"/>
    <property type="evidence" value="ECO:0000304"/>
    <property type="project" value="TAIR"/>
</dbReference>
<dbReference type="GO" id="GO:0051726">
    <property type="term" value="P:regulation of cell cycle"/>
    <property type="evidence" value="ECO:0000304"/>
    <property type="project" value="TAIR"/>
</dbReference>
<dbReference type="CDD" id="cd07841">
    <property type="entry name" value="STKc_CDK7"/>
    <property type="match status" value="1"/>
</dbReference>
<dbReference type="FunFam" id="3.30.200.20:FF:000289">
    <property type="entry name" value="Cyclin-dependent kinase D-1"/>
    <property type="match status" value="1"/>
</dbReference>
<dbReference type="FunFam" id="1.10.510.10:FF:000097">
    <property type="entry name" value="Putative cyclin-dependent kinase 7"/>
    <property type="match status" value="1"/>
</dbReference>
<dbReference type="Gene3D" id="3.30.200.20">
    <property type="entry name" value="Phosphorylase Kinase, domain 1"/>
    <property type="match status" value="1"/>
</dbReference>
<dbReference type="Gene3D" id="1.10.510.10">
    <property type="entry name" value="Transferase(Phosphotransferase) domain 1"/>
    <property type="match status" value="1"/>
</dbReference>
<dbReference type="InterPro" id="IPR050108">
    <property type="entry name" value="CDK"/>
</dbReference>
<dbReference type="InterPro" id="IPR037770">
    <property type="entry name" value="CDK7"/>
</dbReference>
<dbReference type="InterPro" id="IPR011009">
    <property type="entry name" value="Kinase-like_dom_sf"/>
</dbReference>
<dbReference type="InterPro" id="IPR000719">
    <property type="entry name" value="Prot_kinase_dom"/>
</dbReference>
<dbReference type="InterPro" id="IPR017441">
    <property type="entry name" value="Protein_kinase_ATP_BS"/>
</dbReference>
<dbReference type="InterPro" id="IPR008271">
    <property type="entry name" value="Ser/Thr_kinase_AS"/>
</dbReference>
<dbReference type="PANTHER" id="PTHR24056">
    <property type="entry name" value="CELL DIVISION PROTEIN KINASE"/>
    <property type="match status" value="1"/>
</dbReference>
<dbReference type="PANTHER" id="PTHR24056:SF554">
    <property type="entry name" value="CYCLIN-DEPENDENT KINASE D-1"/>
    <property type="match status" value="1"/>
</dbReference>
<dbReference type="Pfam" id="PF00069">
    <property type="entry name" value="Pkinase"/>
    <property type="match status" value="1"/>
</dbReference>
<dbReference type="SMART" id="SM00220">
    <property type="entry name" value="S_TKc"/>
    <property type="match status" value="1"/>
</dbReference>
<dbReference type="SUPFAM" id="SSF56112">
    <property type="entry name" value="Protein kinase-like (PK-like)"/>
    <property type="match status" value="1"/>
</dbReference>
<dbReference type="PROSITE" id="PS00107">
    <property type="entry name" value="PROTEIN_KINASE_ATP"/>
    <property type="match status" value="1"/>
</dbReference>
<dbReference type="PROSITE" id="PS50011">
    <property type="entry name" value="PROTEIN_KINASE_DOM"/>
    <property type="match status" value="1"/>
</dbReference>
<dbReference type="PROSITE" id="PS00108">
    <property type="entry name" value="PROTEIN_KINASE_ST"/>
    <property type="match status" value="1"/>
</dbReference>
<evidence type="ECO:0000250" key="1">
    <source>
        <dbReference type="UniProtKB" id="P24100"/>
    </source>
</evidence>
<evidence type="ECO:0000250" key="2">
    <source>
        <dbReference type="UniProtKB" id="Q9C9M7"/>
    </source>
</evidence>
<evidence type="ECO:0000255" key="3">
    <source>
        <dbReference type="PROSITE-ProRule" id="PRU00159"/>
    </source>
</evidence>
<evidence type="ECO:0000255" key="4">
    <source>
        <dbReference type="PROSITE-ProRule" id="PRU10027"/>
    </source>
</evidence>
<evidence type="ECO:0000256" key="5">
    <source>
        <dbReference type="SAM" id="MobiDB-lite"/>
    </source>
</evidence>
<evidence type="ECO:0000269" key="6">
    <source>
    </source>
</evidence>
<evidence type="ECO:0000269" key="7">
    <source>
    </source>
</evidence>
<evidence type="ECO:0000305" key="8"/>
<accession>Q9C9U2</accession>
<protein>
    <recommendedName>
        <fullName>Cyclin-dependent kinase D-1</fullName>
        <shortName>CDKD;1</shortName>
        <ecNumber>2.7.11.22</ecNumber>
        <ecNumber>2.7.11.23</ecNumber>
    </recommendedName>
    <alternativeName>
        <fullName>CDK-activating kinase 3-At</fullName>
        <shortName>CAK3-At</shortName>
    </alternativeName>
</protein>
<comment type="catalytic activity">
    <reaction>
        <text>L-seryl-[protein] + ATP = O-phospho-L-seryl-[protein] + ADP + H(+)</text>
        <dbReference type="Rhea" id="RHEA:17989"/>
        <dbReference type="Rhea" id="RHEA-COMP:9863"/>
        <dbReference type="Rhea" id="RHEA-COMP:11604"/>
        <dbReference type="ChEBI" id="CHEBI:15378"/>
        <dbReference type="ChEBI" id="CHEBI:29999"/>
        <dbReference type="ChEBI" id="CHEBI:30616"/>
        <dbReference type="ChEBI" id="CHEBI:83421"/>
        <dbReference type="ChEBI" id="CHEBI:456216"/>
        <dbReference type="EC" id="2.7.11.22"/>
    </reaction>
</comment>
<comment type="catalytic activity">
    <reaction>
        <text>L-threonyl-[protein] + ATP = O-phospho-L-threonyl-[protein] + ADP + H(+)</text>
        <dbReference type="Rhea" id="RHEA:46608"/>
        <dbReference type="Rhea" id="RHEA-COMP:11060"/>
        <dbReference type="Rhea" id="RHEA-COMP:11605"/>
        <dbReference type="ChEBI" id="CHEBI:15378"/>
        <dbReference type="ChEBI" id="CHEBI:30013"/>
        <dbReference type="ChEBI" id="CHEBI:30616"/>
        <dbReference type="ChEBI" id="CHEBI:61977"/>
        <dbReference type="ChEBI" id="CHEBI:456216"/>
        <dbReference type="EC" id="2.7.11.22"/>
    </reaction>
</comment>
<comment type="catalytic activity">
    <reaction>
        <text>[DNA-directed RNA polymerase] + ATP = phospho-[DNA-directed RNA polymerase] + ADP + H(+)</text>
        <dbReference type="Rhea" id="RHEA:10216"/>
        <dbReference type="Rhea" id="RHEA-COMP:11321"/>
        <dbReference type="Rhea" id="RHEA-COMP:11322"/>
        <dbReference type="ChEBI" id="CHEBI:15378"/>
        <dbReference type="ChEBI" id="CHEBI:30616"/>
        <dbReference type="ChEBI" id="CHEBI:43176"/>
        <dbReference type="ChEBI" id="CHEBI:68546"/>
        <dbReference type="ChEBI" id="CHEBI:456216"/>
        <dbReference type="EC" id="2.7.11.23"/>
    </reaction>
</comment>
<comment type="subcellular location">
    <subcellularLocation>
        <location evidence="7">Nucleus</location>
    </subcellularLocation>
</comment>
<comment type="tissue specificity">
    <text evidence="6">Expressed at low levels in suspension cell culture, but not in plant organs.</text>
</comment>
<comment type="PTM">
    <text>Autophosphorylated.</text>
</comment>
<comment type="similarity">
    <text evidence="8">Belongs to the protein kinase superfamily. CMGC Ser/Thr protein kinase family. CDC2/CDKX subfamily.</text>
</comment>
<feature type="chain" id="PRO_0000293119" description="Cyclin-dependent kinase D-1">
    <location>
        <begin position="1"/>
        <end position="398"/>
    </location>
</feature>
<feature type="domain" description="Protein kinase" evidence="3">
    <location>
        <begin position="11"/>
        <end position="291"/>
    </location>
</feature>
<feature type="region of interest" description="Disordered" evidence="5">
    <location>
        <begin position="296"/>
        <end position="318"/>
    </location>
</feature>
<feature type="compositionally biased region" description="Basic and acidic residues" evidence="5">
    <location>
        <begin position="308"/>
        <end position="318"/>
    </location>
</feature>
<feature type="active site" description="Proton acceptor" evidence="3 4">
    <location>
        <position position="133"/>
    </location>
</feature>
<feature type="binding site" evidence="3">
    <location>
        <begin position="17"/>
        <end position="25"/>
    </location>
    <ligand>
        <name>ATP</name>
        <dbReference type="ChEBI" id="CHEBI:30616"/>
    </ligand>
</feature>
<feature type="binding site" evidence="8">
    <location>
        <position position="40"/>
    </location>
    <ligand>
        <name>ATP</name>
        <dbReference type="ChEBI" id="CHEBI:30616"/>
    </ligand>
</feature>
<feature type="modified residue" description="Phosphotyrosine" evidence="1">
    <location>
        <position position="22"/>
    </location>
</feature>
<feature type="modified residue" description="Phosphoserine" evidence="2">
    <location>
        <position position="160"/>
    </location>
</feature>
<feature type="modified residue" description="Phosphothreonine" evidence="2">
    <location>
        <position position="166"/>
    </location>
</feature>
<feature type="mutagenesis site" description="Prevents autophosphorylation." evidence="7">
    <original>K</original>
    <variation>R</variation>
    <location>
        <position position="40"/>
    </location>
</feature>
<keyword id="KW-0067">ATP-binding</keyword>
<keyword id="KW-0418">Kinase</keyword>
<keyword id="KW-0547">Nucleotide-binding</keyword>
<keyword id="KW-0539">Nucleus</keyword>
<keyword id="KW-0597">Phosphoprotein</keyword>
<keyword id="KW-1185">Reference proteome</keyword>
<keyword id="KW-0723">Serine/threonine-protein kinase</keyword>
<keyword id="KW-0808">Transferase</keyword>
<name>CDKD1_ARATH</name>